<keyword id="KW-0007">Acetylation</keyword>
<keyword id="KW-0020">Allergen</keyword>
<keyword id="KW-0106">Calcium</keyword>
<keyword id="KW-0903">Direct protein sequencing</keyword>
<keyword id="KW-0479">Metal-binding</keyword>
<keyword id="KW-0514">Muscle protein</keyword>
<keyword id="KW-0677">Repeat</keyword>
<comment type="function">
    <text evidence="2 3">In muscle, parvalbumin is thought to be involved in relaxation after contraction. It binds two calcium ions (By similarity).</text>
</comment>
<comment type="mass spectrometry"/>
<comment type="miscellaneous">
    <text evidence="2 6">Is regarded as an important allergen.</text>
</comment>
<comment type="miscellaneous">
    <text evidence="6">On the 2D-gel the determined pI of this protein is: 4.14, its MW is: 11.55 kDa.</text>
</comment>
<comment type="similarity">
    <text evidence="4">Belongs to the parvalbumin family.</text>
</comment>
<feature type="chain" id="PRO_0000399410" description="Parvalbumin beta 2">
    <location>
        <begin position="1"/>
        <end position="108"/>
    </location>
</feature>
<feature type="domain" description="EF-hand 1" evidence="5">
    <location>
        <begin position="38"/>
        <end position="73"/>
    </location>
</feature>
<feature type="domain" description="EF-hand 2" evidence="5">
    <location>
        <begin position="77"/>
        <end position="108"/>
    </location>
</feature>
<feature type="binding site" evidence="1 5">
    <location>
        <position position="51"/>
    </location>
    <ligand>
        <name>Ca(2+)</name>
        <dbReference type="ChEBI" id="CHEBI:29108"/>
        <label>1</label>
    </ligand>
</feature>
<feature type="binding site" evidence="1 5">
    <location>
        <position position="53"/>
    </location>
    <ligand>
        <name>Ca(2+)</name>
        <dbReference type="ChEBI" id="CHEBI:29108"/>
        <label>1</label>
    </ligand>
</feature>
<feature type="binding site" evidence="1 5">
    <location>
        <position position="55"/>
    </location>
    <ligand>
        <name>Ca(2+)</name>
        <dbReference type="ChEBI" id="CHEBI:29108"/>
        <label>1</label>
    </ligand>
</feature>
<feature type="binding site" evidence="1">
    <location>
        <position position="57"/>
    </location>
    <ligand>
        <name>Ca(2+)</name>
        <dbReference type="ChEBI" id="CHEBI:29108"/>
        <label>1</label>
    </ligand>
</feature>
<feature type="binding site" evidence="1">
    <location>
        <position position="59"/>
    </location>
    <ligand>
        <name>Ca(2+)</name>
        <dbReference type="ChEBI" id="CHEBI:29108"/>
        <label>1</label>
    </ligand>
</feature>
<feature type="binding site" evidence="1 5">
    <location>
        <position position="62"/>
    </location>
    <ligand>
        <name>Ca(2+)</name>
        <dbReference type="ChEBI" id="CHEBI:29108"/>
        <label>1</label>
    </ligand>
</feature>
<feature type="binding site" evidence="1 5">
    <location>
        <position position="90"/>
    </location>
    <ligand>
        <name>Ca(2+)</name>
        <dbReference type="ChEBI" id="CHEBI:29108"/>
        <label>2</label>
    </ligand>
</feature>
<feature type="binding site" evidence="1 5">
    <location>
        <position position="92"/>
    </location>
    <ligand>
        <name>Ca(2+)</name>
        <dbReference type="ChEBI" id="CHEBI:29108"/>
        <label>2</label>
    </ligand>
</feature>
<feature type="binding site" evidence="1 5">
    <location>
        <position position="94"/>
    </location>
    <ligand>
        <name>Ca(2+)</name>
        <dbReference type="ChEBI" id="CHEBI:29108"/>
        <label>2</label>
    </ligand>
</feature>
<feature type="binding site" evidence="1">
    <location>
        <position position="96"/>
    </location>
    <ligand>
        <name>Ca(2+)</name>
        <dbReference type="ChEBI" id="CHEBI:29108"/>
        <label>2</label>
    </ligand>
</feature>
<feature type="binding site" evidence="1 5">
    <location>
        <position position="101"/>
    </location>
    <ligand>
        <name>Ca(2+)</name>
        <dbReference type="ChEBI" id="CHEBI:29108"/>
        <label>2</label>
    </ligand>
</feature>
<feature type="modified residue" description="N-acetylalanine" evidence="6">
    <location>
        <position position="1"/>
    </location>
</feature>
<feature type="unsure residue" description="I or L" evidence="6">
    <location>
        <position position="5"/>
    </location>
</feature>
<feature type="unsure residue" description="L or I" evidence="6">
    <location>
        <position position="6"/>
    </location>
</feature>
<feature type="unsure residue" description="I or L" evidence="6">
    <location>
        <position position="11"/>
    </location>
</feature>
<feature type="unsure residue" description="L or I" evidence="6">
    <location>
        <position position="15"/>
    </location>
</feature>
<feature type="unsure residue" description="K or Q" evidence="6">
    <location>
        <position position="16"/>
    </location>
</feature>
<feature type="unsure residue" description="K or Q" evidence="6">
    <location>
        <position position="27"/>
    </location>
</feature>
<feature type="unsure residue" description="K or Q" evidence="6">
    <location>
        <position position="32"/>
    </location>
</feature>
<feature type="unsure residue" description="L or I" evidence="6">
    <location>
        <position position="35"/>
    </location>
</feature>
<feature type="unsure residue" description="K or Q" evidence="6">
    <location>
        <position position="38"/>
    </location>
</feature>
<feature type="unsure residue" description="I or L" evidence="6">
    <location>
        <position position="43"/>
    </location>
</feature>
<feature type="unsure residue" description="K or Q" evidence="6">
    <location>
        <position position="44"/>
    </location>
</feature>
<feature type="unsure residue" description="K or Q" evidence="6">
    <location>
        <position position="45"/>
    </location>
</feature>
<feature type="unsure residue" description="I or L" evidence="6">
    <location>
        <position position="50"/>
    </location>
</feature>
<feature type="unsure residue" description="Q or K" evidence="6">
    <location>
        <position position="52"/>
    </location>
</feature>
<feature type="unsure residue" description="K or Q" evidence="6">
    <location>
        <position position="54"/>
    </location>
</feature>
<feature type="unsure residue" description="I or L" evidence="6">
    <location>
        <position position="58"/>
    </location>
</feature>
<feature type="unsure residue" description="L or I" evidence="6">
    <location>
        <position position="63"/>
    </location>
</feature>
<feature type="unsure residue" description="K or Q" evidence="6">
    <location>
        <position position="64"/>
    </location>
</feature>
<feature type="unsure residue" description="L or I" evidence="6">
    <location>
        <position position="65"/>
    </location>
</feature>
<feature type="unsure residue" description="L or I" evidence="6">
    <location>
        <position position="67"/>
    </location>
</feature>
<feature type="unsure residue" description="Q or K" evidence="6">
    <location>
        <position position="68"/>
    </location>
</feature>
<feature type="unsure residue" description="L or I" evidence="6">
    <location>
        <position position="77"/>
    </location>
</feature>
<feature type="unsure residue" description="K or Q" evidence="6">
    <location>
        <position position="83"/>
    </location>
</feature>
<feature type="unsure residue" description="L or I" evidence="6">
    <location>
        <position position="86"/>
    </location>
</feature>
<feature type="unsure residue" description="K or Q" evidence="6">
    <location>
        <position position="87"/>
    </location>
</feature>
<feature type="unsure residue" description="I or L" evidence="6">
    <location>
        <position position="97"/>
    </location>
</feature>
<feature type="unsure residue" description="L or I" evidence="6">
    <location>
        <position position="105"/>
    </location>
</feature>
<feature type="unsure residue" description="K or Q" evidence="6">
    <location>
        <position position="107"/>
    </location>
</feature>
<accession>P86750</accession>
<dbReference type="SMR" id="P86750"/>
<dbReference type="iPTMnet" id="P86750"/>
<dbReference type="GO" id="GO:0005737">
    <property type="term" value="C:cytoplasm"/>
    <property type="evidence" value="ECO:0007669"/>
    <property type="project" value="TreeGrafter"/>
</dbReference>
<dbReference type="GO" id="GO:0005509">
    <property type="term" value="F:calcium ion binding"/>
    <property type="evidence" value="ECO:0007669"/>
    <property type="project" value="InterPro"/>
</dbReference>
<dbReference type="CDD" id="cd16255">
    <property type="entry name" value="EFh_parvalbumin_beta"/>
    <property type="match status" value="1"/>
</dbReference>
<dbReference type="FunFam" id="1.10.238.10:FF:000060">
    <property type="entry name" value="Parvalbumin, thymic"/>
    <property type="match status" value="1"/>
</dbReference>
<dbReference type="Gene3D" id="1.10.238.10">
    <property type="entry name" value="EF-hand"/>
    <property type="match status" value="1"/>
</dbReference>
<dbReference type="InterPro" id="IPR011992">
    <property type="entry name" value="EF-hand-dom_pair"/>
</dbReference>
<dbReference type="InterPro" id="IPR018247">
    <property type="entry name" value="EF_Hand_1_Ca_BS"/>
</dbReference>
<dbReference type="InterPro" id="IPR002048">
    <property type="entry name" value="EF_hand_dom"/>
</dbReference>
<dbReference type="InterPro" id="IPR008080">
    <property type="entry name" value="Parvalbumin"/>
</dbReference>
<dbReference type="PANTHER" id="PTHR11653:SF12">
    <property type="entry name" value="PARVALBUMIN"/>
    <property type="match status" value="1"/>
</dbReference>
<dbReference type="PANTHER" id="PTHR11653">
    <property type="entry name" value="PARVALBUMIN ALPHA"/>
    <property type="match status" value="1"/>
</dbReference>
<dbReference type="Pfam" id="PF13499">
    <property type="entry name" value="EF-hand_7"/>
    <property type="match status" value="1"/>
</dbReference>
<dbReference type="PRINTS" id="PR01697">
    <property type="entry name" value="PARVALBUMIN"/>
</dbReference>
<dbReference type="SMART" id="SM00054">
    <property type="entry name" value="EFh"/>
    <property type="match status" value="2"/>
</dbReference>
<dbReference type="SUPFAM" id="SSF47473">
    <property type="entry name" value="EF-hand"/>
    <property type="match status" value="1"/>
</dbReference>
<dbReference type="PROSITE" id="PS00018">
    <property type="entry name" value="EF_HAND_1"/>
    <property type="match status" value="2"/>
</dbReference>
<dbReference type="PROSITE" id="PS50222">
    <property type="entry name" value="EF_HAND_2"/>
    <property type="match status" value="2"/>
</dbReference>
<reference evidence="8" key="1">
    <citation type="journal article" date="2010" name="J. Proteome Res.">
        <title>Extensive de novo sequencing of new parvalbumin isoforms using a novel combination of bottom-up proteomics, accurate molecular mass measurement by FTICR-MS, and selected MS/MS ion monitoring.</title>
        <authorList>
            <person name="Carrera M."/>
            <person name="Canas B."/>
            <person name="Vazquez J."/>
            <person name="Gallardo J.M."/>
        </authorList>
    </citation>
    <scope>PROTEIN SEQUENCE</scope>
    <scope>MASS SPECTROMETRY</scope>
    <scope>ACETYLATION AT ALA-1</scope>
    <source>
        <tissue evidence="6">Muscle</tissue>
    </source>
</reference>
<sequence>AFSGILAEADIAAALKACEAADSFNYKAFFAKVGLSAKSADDIKKAFFVIDQDKSGFIEEDELKLFLQVFSAGARALTDAETKAFLKAGDSDGDGAIGVDEFAVLVKA</sequence>
<evidence type="ECO:0000250" key="1">
    <source>
        <dbReference type="UniProtKB" id="P02621"/>
    </source>
</evidence>
<evidence type="ECO:0000250" key="2">
    <source>
        <dbReference type="UniProtKB" id="P02622"/>
    </source>
</evidence>
<evidence type="ECO:0000250" key="3">
    <source>
        <dbReference type="UniProtKB" id="P02624"/>
    </source>
</evidence>
<evidence type="ECO:0000255" key="4"/>
<evidence type="ECO:0000255" key="5">
    <source>
        <dbReference type="PROSITE-ProRule" id="PRU00448"/>
    </source>
</evidence>
<evidence type="ECO:0000269" key="6">
    <source>
    </source>
</evidence>
<evidence type="ECO:0000303" key="7">
    <source>
    </source>
</evidence>
<evidence type="ECO:0000305" key="8"/>
<organism>
    <name type="scientific">Merluccius polylepis</name>
    <name type="common">Southern hake</name>
    <name type="synonym">Merluccius australis polylepis</name>
    <dbReference type="NCBI Taxonomy" id="2705414"/>
    <lineage>
        <taxon>Eukaryota</taxon>
        <taxon>Metazoa</taxon>
        <taxon>Chordata</taxon>
        <taxon>Craniata</taxon>
        <taxon>Vertebrata</taxon>
        <taxon>Euteleostomi</taxon>
        <taxon>Actinopterygii</taxon>
        <taxon>Neopterygii</taxon>
        <taxon>Teleostei</taxon>
        <taxon>Neoteleostei</taxon>
        <taxon>Acanthomorphata</taxon>
        <taxon>Zeiogadaria</taxon>
        <taxon>Gadariae</taxon>
        <taxon>Gadiformes</taxon>
        <taxon>Gadoidei</taxon>
        <taxon>Merlucciidae</taxon>
        <taxon>Merluccius</taxon>
    </lineage>
</organism>
<proteinExistence type="evidence at protein level"/>
<name>PRVB2_MERPL</name>
<protein>
    <recommendedName>
        <fullName evidence="7">Parvalbumin beta 2</fullName>
    </recommendedName>
</protein>